<evidence type="ECO:0000255" key="1">
    <source>
        <dbReference type="HAMAP-Rule" id="MF_01227"/>
    </source>
</evidence>
<evidence type="ECO:0000269" key="2">
    <source>
    </source>
</evidence>
<evidence type="ECO:0000303" key="3">
    <source>
    </source>
</evidence>
<dbReference type="EC" id="6.3.4.2" evidence="1"/>
<dbReference type="EMBL" id="M22039">
    <property type="protein sequence ID" value="AAA16801.1"/>
    <property type="molecule type" value="Unassigned_DNA"/>
</dbReference>
<dbReference type="EMBL" id="Z49782">
    <property type="protein sequence ID" value="CAA89870.1"/>
    <property type="molecule type" value="Genomic_DNA"/>
</dbReference>
<dbReference type="EMBL" id="AL009126">
    <property type="protein sequence ID" value="CAB15743.1"/>
    <property type="molecule type" value="Genomic_DNA"/>
</dbReference>
<dbReference type="PIR" id="A32354">
    <property type="entry name" value="SYBSTP"/>
</dbReference>
<dbReference type="RefSeq" id="NP_391596.1">
    <property type="nucleotide sequence ID" value="NC_000964.3"/>
</dbReference>
<dbReference type="RefSeq" id="WP_003227612.1">
    <property type="nucleotide sequence ID" value="NZ_OZ025638.1"/>
</dbReference>
<dbReference type="SMR" id="P13242"/>
<dbReference type="FunCoup" id="P13242">
    <property type="interactions" value="754"/>
</dbReference>
<dbReference type="STRING" id="224308.BSU37150"/>
<dbReference type="MEROPS" id="C26.964"/>
<dbReference type="jPOST" id="P13242"/>
<dbReference type="PaxDb" id="224308-BSU37150"/>
<dbReference type="EnsemblBacteria" id="CAB15743">
    <property type="protein sequence ID" value="CAB15743"/>
    <property type="gene ID" value="BSU_37150"/>
</dbReference>
<dbReference type="GeneID" id="937044"/>
<dbReference type="KEGG" id="bsu:BSU37150"/>
<dbReference type="PATRIC" id="fig|224308.179.peg.4024"/>
<dbReference type="eggNOG" id="COG0504">
    <property type="taxonomic scope" value="Bacteria"/>
</dbReference>
<dbReference type="InParanoid" id="P13242"/>
<dbReference type="OrthoDB" id="9801107at2"/>
<dbReference type="PhylomeDB" id="P13242"/>
<dbReference type="BioCyc" id="BSUB:BSU37150-MONOMER"/>
<dbReference type="BioCyc" id="MetaCyc:BSU37150-MONOMER"/>
<dbReference type="UniPathway" id="UPA00159">
    <property type="reaction ID" value="UER00277"/>
</dbReference>
<dbReference type="Proteomes" id="UP000001570">
    <property type="component" value="Chromosome"/>
</dbReference>
<dbReference type="GO" id="GO:0005829">
    <property type="term" value="C:cytosol"/>
    <property type="evidence" value="ECO:0000318"/>
    <property type="project" value="GO_Central"/>
</dbReference>
<dbReference type="GO" id="GO:0005524">
    <property type="term" value="F:ATP binding"/>
    <property type="evidence" value="ECO:0007669"/>
    <property type="project" value="UniProtKB-KW"/>
</dbReference>
<dbReference type="GO" id="GO:0003883">
    <property type="term" value="F:CTP synthase activity"/>
    <property type="evidence" value="ECO:0000318"/>
    <property type="project" value="GO_Central"/>
</dbReference>
<dbReference type="GO" id="GO:0004359">
    <property type="term" value="F:glutaminase activity"/>
    <property type="evidence" value="ECO:0007669"/>
    <property type="project" value="RHEA"/>
</dbReference>
<dbReference type="GO" id="GO:0042802">
    <property type="term" value="F:identical protein binding"/>
    <property type="evidence" value="ECO:0000318"/>
    <property type="project" value="GO_Central"/>
</dbReference>
<dbReference type="GO" id="GO:0046872">
    <property type="term" value="F:metal ion binding"/>
    <property type="evidence" value="ECO:0007669"/>
    <property type="project" value="UniProtKB-KW"/>
</dbReference>
<dbReference type="GO" id="GO:0044210">
    <property type="term" value="P:'de novo' CTP biosynthetic process"/>
    <property type="evidence" value="ECO:0007669"/>
    <property type="project" value="UniProtKB-UniRule"/>
</dbReference>
<dbReference type="GO" id="GO:0006241">
    <property type="term" value="P:CTP biosynthetic process"/>
    <property type="evidence" value="ECO:0000318"/>
    <property type="project" value="GO_Central"/>
</dbReference>
<dbReference type="GO" id="GO:0019856">
    <property type="term" value="P:pyrimidine nucleobase biosynthetic process"/>
    <property type="evidence" value="ECO:0000318"/>
    <property type="project" value="GO_Central"/>
</dbReference>
<dbReference type="CDD" id="cd03113">
    <property type="entry name" value="CTPS_N"/>
    <property type="match status" value="1"/>
</dbReference>
<dbReference type="CDD" id="cd01746">
    <property type="entry name" value="GATase1_CTP_Synthase"/>
    <property type="match status" value="1"/>
</dbReference>
<dbReference type="FunFam" id="3.40.50.300:FF:000009">
    <property type="entry name" value="CTP synthase"/>
    <property type="match status" value="1"/>
</dbReference>
<dbReference type="FunFam" id="3.40.50.880:FF:000002">
    <property type="entry name" value="CTP synthase"/>
    <property type="match status" value="1"/>
</dbReference>
<dbReference type="Gene3D" id="3.40.50.880">
    <property type="match status" value="1"/>
</dbReference>
<dbReference type="Gene3D" id="3.40.50.300">
    <property type="entry name" value="P-loop containing nucleotide triphosphate hydrolases"/>
    <property type="match status" value="1"/>
</dbReference>
<dbReference type="HAMAP" id="MF_01227">
    <property type="entry name" value="PyrG"/>
    <property type="match status" value="1"/>
</dbReference>
<dbReference type="InterPro" id="IPR029062">
    <property type="entry name" value="Class_I_gatase-like"/>
</dbReference>
<dbReference type="InterPro" id="IPR004468">
    <property type="entry name" value="CTP_synthase"/>
</dbReference>
<dbReference type="InterPro" id="IPR017456">
    <property type="entry name" value="CTP_synthase_N"/>
</dbReference>
<dbReference type="InterPro" id="IPR017926">
    <property type="entry name" value="GATASE"/>
</dbReference>
<dbReference type="InterPro" id="IPR033828">
    <property type="entry name" value="GATase1_CTP_Synthase"/>
</dbReference>
<dbReference type="InterPro" id="IPR027417">
    <property type="entry name" value="P-loop_NTPase"/>
</dbReference>
<dbReference type="NCBIfam" id="NF003792">
    <property type="entry name" value="PRK05380.1"/>
    <property type="match status" value="1"/>
</dbReference>
<dbReference type="NCBIfam" id="TIGR00337">
    <property type="entry name" value="PyrG"/>
    <property type="match status" value="1"/>
</dbReference>
<dbReference type="PANTHER" id="PTHR11550">
    <property type="entry name" value="CTP SYNTHASE"/>
    <property type="match status" value="1"/>
</dbReference>
<dbReference type="PANTHER" id="PTHR11550:SF0">
    <property type="entry name" value="CTP SYNTHASE-RELATED"/>
    <property type="match status" value="1"/>
</dbReference>
<dbReference type="Pfam" id="PF06418">
    <property type="entry name" value="CTP_synth_N"/>
    <property type="match status" value="1"/>
</dbReference>
<dbReference type="Pfam" id="PF00117">
    <property type="entry name" value="GATase"/>
    <property type="match status" value="1"/>
</dbReference>
<dbReference type="SUPFAM" id="SSF52317">
    <property type="entry name" value="Class I glutamine amidotransferase-like"/>
    <property type="match status" value="1"/>
</dbReference>
<dbReference type="SUPFAM" id="SSF52540">
    <property type="entry name" value="P-loop containing nucleoside triphosphate hydrolases"/>
    <property type="match status" value="1"/>
</dbReference>
<dbReference type="PROSITE" id="PS51273">
    <property type="entry name" value="GATASE_TYPE_1"/>
    <property type="match status" value="1"/>
</dbReference>
<comment type="function">
    <text evidence="1">Catalyzes the ATP-dependent amination of UTP to CTP with either L-glutamine or ammonia as the source of nitrogen. Regulates intracellular CTP levels through interactions with the four ribonucleotide triphosphates.</text>
</comment>
<comment type="catalytic activity">
    <reaction evidence="1">
        <text>UTP + L-glutamine + ATP + H2O = CTP + L-glutamate + ADP + phosphate + 2 H(+)</text>
        <dbReference type="Rhea" id="RHEA:26426"/>
        <dbReference type="ChEBI" id="CHEBI:15377"/>
        <dbReference type="ChEBI" id="CHEBI:15378"/>
        <dbReference type="ChEBI" id="CHEBI:29985"/>
        <dbReference type="ChEBI" id="CHEBI:30616"/>
        <dbReference type="ChEBI" id="CHEBI:37563"/>
        <dbReference type="ChEBI" id="CHEBI:43474"/>
        <dbReference type="ChEBI" id="CHEBI:46398"/>
        <dbReference type="ChEBI" id="CHEBI:58359"/>
        <dbReference type="ChEBI" id="CHEBI:456216"/>
        <dbReference type="EC" id="6.3.4.2"/>
    </reaction>
</comment>
<comment type="catalytic activity">
    <reaction evidence="1">
        <text>L-glutamine + H2O = L-glutamate + NH4(+)</text>
        <dbReference type="Rhea" id="RHEA:15889"/>
        <dbReference type="ChEBI" id="CHEBI:15377"/>
        <dbReference type="ChEBI" id="CHEBI:28938"/>
        <dbReference type="ChEBI" id="CHEBI:29985"/>
        <dbReference type="ChEBI" id="CHEBI:58359"/>
    </reaction>
</comment>
<comment type="catalytic activity">
    <reaction evidence="1">
        <text>UTP + NH4(+) + ATP = CTP + ADP + phosphate + 2 H(+)</text>
        <dbReference type="Rhea" id="RHEA:16597"/>
        <dbReference type="ChEBI" id="CHEBI:15378"/>
        <dbReference type="ChEBI" id="CHEBI:28938"/>
        <dbReference type="ChEBI" id="CHEBI:30616"/>
        <dbReference type="ChEBI" id="CHEBI:37563"/>
        <dbReference type="ChEBI" id="CHEBI:43474"/>
        <dbReference type="ChEBI" id="CHEBI:46398"/>
        <dbReference type="ChEBI" id="CHEBI:456216"/>
    </reaction>
</comment>
<comment type="activity regulation">
    <text evidence="1">Allosterically activated by GTP, when glutamine is the substrate; GTP has no effect on the reaction when ammonia is the substrate. The allosteric effector GTP functions by stabilizing the protein conformation that binds the tetrahedral intermediate(s) formed during glutamine hydrolysis. Inhibited by the product CTP, via allosteric rather than competitive inhibition.</text>
</comment>
<comment type="pathway">
    <text evidence="1">Pyrimidine metabolism; CTP biosynthesis via de novo pathway; CTP from UDP: step 2/2.</text>
</comment>
<comment type="subunit">
    <text evidence="1 2">Homotetramer (By similarity). Interacts with BrxC (PubMed:33722570).</text>
</comment>
<comment type="miscellaneous">
    <text evidence="1">CTPSs have evolved a hybrid strategy for distinguishing between UTP and CTP. The overlapping regions of the product feedback inhibitory and substrate sites recognize a common feature in both compounds, the triphosphate moiety. To differentiate isosteric substrate and product pyrimidine rings, an additional pocket far from the expected kinase/ligase catalytic site, specifically recognizes the cytosine and ribose portions of the product inhibitor.</text>
</comment>
<comment type="similarity">
    <text evidence="1">Belongs to the CTP synthase family.</text>
</comment>
<proteinExistence type="evidence at protein level"/>
<name>PYRG_BACSU</name>
<keyword id="KW-0067">ATP-binding</keyword>
<keyword id="KW-0315">Glutamine amidotransferase</keyword>
<keyword id="KW-0436">Ligase</keyword>
<keyword id="KW-0460">Magnesium</keyword>
<keyword id="KW-0479">Metal-binding</keyword>
<keyword id="KW-0547">Nucleotide-binding</keyword>
<keyword id="KW-0665">Pyrimidine biosynthesis</keyword>
<keyword id="KW-1185">Reference proteome</keyword>
<feature type="chain" id="PRO_0000138165" description="CTP synthase">
    <location>
        <begin position="1"/>
        <end position="535"/>
    </location>
</feature>
<feature type="domain" description="Glutamine amidotransferase type-1" evidence="1">
    <location>
        <begin position="292"/>
        <end position="534"/>
    </location>
</feature>
<feature type="region of interest" description="Amidoligase domain" evidence="1">
    <location>
        <begin position="1"/>
        <end position="267"/>
    </location>
</feature>
<feature type="active site" description="Nucleophile; for glutamine hydrolysis" evidence="1">
    <location>
        <position position="381"/>
    </location>
</feature>
<feature type="active site" evidence="1">
    <location>
        <position position="507"/>
    </location>
</feature>
<feature type="active site" evidence="1">
    <location>
        <position position="509"/>
    </location>
</feature>
<feature type="binding site" evidence="1">
    <location>
        <position position="13"/>
    </location>
    <ligand>
        <name>CTP</name>
        <dbReference type="ChEBI" id="CHEBI:37563"/>
        <note>allosteric inhibitor</note>
    </ligand>
</feature>
<feature type="binding site" evidence="1">
    <location>
        <position position="13"/>
    </location>
    <ligand>
        <name>UTP</name>
        <dbReference type="ChEBI" id="CHEBI:46398"/>
    </ligand>
</feature>
<feature type="binding site" evidence="1">
    <location>
        <begin position="14"/>
        <end position="19"/>
    </location>
    <ligand>
        <name>ATP</name>
        <dbReference type="ChEBI" id="CHEBI:30616"/>
    </ligand>
</feature>
<feature type="binding site" evidence="1">
    <location>
        <position position="54"/>
    </location>
    <ligand>
        <name>L-glutamine</name>
        <dbReference type="ChEBI" id="CHEBI:58359"/>
    </ligand>
</feature>
<feature type="binding site" evidence="1">
    <location>
        <position position="71"/>
    </location>
    <ligand>
        <name>ATP</name>
        <dbReference type="ChEBI" id="CHEBI:30616"/>
    </ligand>
</feature>
<feature type="binding site" evidence="1">
    <location>
        <position position="71"/>
    </location>
    <ligand>
        <name>Mg(2+)</name>
        <dbReference type="ChEBI" id="CHEBI:18420"/>
    </ligand>
</feature>
<feature type="binding site" evidence="1">
    <location>
        <position position="141"/>
    </location>
    <ligand>
        <name>Mg(2+)</name>
        <dbReference type="ChEBI" id="CHEBI:18420"/>
    </ligand>
</feature>
<feature type="binding site" evidence="1">
    <location>
        <begin position="148"/>
        <end position="150"/>
    </location>
    <ligand>
        <name>CTP</name>
        <dbReference type="ChEBI" id="CHEBI:37563"/>
        <note>allosteric inhibitor</note>
    </ligand>
</feature>
<feature type="binding site" evidence="1">
    <location>
        <begin position="188"/>
        <end position="193"/>
    </location>
    <ligand>
        <name>CTP</name>
        <dbReference type="ChEBI" id="CHEBI:37563"/>
        <note>allosteric inhibitor</note>
    </ligand>
</feature>
<feature type="binding site" evidence="1">
    <location>
        <begin position="188"/>
        <end position="193"/>
    </location>
    <ligand>
        <name>UTP</name>
        <dbReference type="ChEBI" id="CHEBI:46398"/>
    </ligand>
</feature>
<feature type="binding site" evidence="1">
    <location>
        <position position="224"/>
    </location>
    <ligand>
        <name>CTP</name>
        <dbReference type="ChEBI" id="CHEBI:37563"/>
        <note>allosteric inhibitor</note>
    </ligand>
</feature>
<feature type="binding site" evidence="1">
    <location>
        <position position="224"/>
    </location>
    <ligand>
        <name>UTP</name>
        <dbReference type="ChEBI" id="CHEBI:46398"/>
    </ligand>
</feature>
<feature type="binding site" evidence="1">
    <location>
        <position position="354"/>
    </location>
    <ligand>
        <name>L-glutamine</name>
        <dbReference type="ChEBI" id="CHEBI:58359"/>
    </ligand>
</feature>
<feature type="binding site" evidence="1">
    <location>
        <begin position="382"/>
        <end position="385"/>
    </location>
    <ligand>
        <name>L-glutamine</name>
        <dbReference type="ChEBI" id="CHEBI:58359"/>
    </ligand>
</feature>
<feature type="binding site" evidence="1">
    <location>
        <position position="405"/>
    </location>
    <ligand>
        <name>L-glutamine</name>
        <dbReference type="ChEBI" id="CHEBI:58359"/>
    </ligand>
</feature>
<feature type="binding site" evidence="1">
    <location>
        <position position="462"/>
    </location>
    <ligand>
        <name>L-glutamine</name>
        <dbReference type="ChEBI" id="CHEBI:58359"/>
    </ligand>
</feature>
<sequence length="535" mass="59718">MTKYIFVTGGVVSSLGKGIVAASLGRLLKNRGLNVTIQKFDPYINVDPGTMSPYQHGEVFVTDDGAETDLDLGHYERFIDINLNKFSNVTTGKIYSTVLKKERRGDYLGGTVQVIPHITNELKDRVYRAGKETNADVVITEIGGTVGDIESLPFLEAIRQMKSDIGRENVMYIHCTLVPYIKAAGELKTKPTQHSVKELRSLGIQPNIIVVRTEMPISQDMKDKIALFCDIDTKAVIECEDADNLYSIPLELQKQGLDKLVCEHMKLACKEAEMSEWKELVNKVSNLSQTITIGLVGKYVELPDAYISVVESLRHAGYAFDTDVKVKWINAEEVTENNIAELTSGTDGIIVPGGFGDRGVEGKIVATKYARENNIPFLGICLGMQVASIEYARNVLGLKGAHSAEIDPSTQYPIIDLLPEQKDVEDLGGTLRLGLYPCKLEEGTKAFEVYQDEVVYERHRHRYEFNNEFRQQMEEQGFVFSGTSPDGRLVEIIELKDHPWFVASQFHPEFKSRPTRPQPLFKGFIGASVEAANQK</sequence>
<organism>
    <name type="scientific">Bacillus subtilis (strain 168)</name>
    <dbReference type="NCBI Taxonomy" id="224308"/>
    <lineage>
        <taxon>Bacteria</taxon>
        <taxon>Bacillati</taxon>
        <taxon>Bacillota</taxon>
        <taxon>Bacilli</taxon>
        <taxon>Bacillales</taxon>
        <taxon>Bacillaceae</taxon>
        <taxon>Bacillus</taxon>
    </lineage>
</organism>
<accession>P13242</accession>
<protein>
    <recommendedName>
        <fullName evidence="1">CTP synthase</fullName>
        <ecNumber evidence="1">6.3.4.2</ecNumber>
    </recommendedName>
    <alternativeName>
        <fullName evidence="1">Cytidine 5'-triphosphate synthase</fullName>
    </alternativeName>
    <alternativeName>
        <fullName evidence="1">Cytidine triphosphate synthetase</fullName>
        <shortName evidence="1">CTP synthetase</shortName>
        <shortName evidence="1">CTPS</shortName>
    </alternativeName>
    <alternativeName>
        <fullName evidence="1">UTP--ammonia ligase</fullName>
    </alternativeName>
</protein>
<reference key="1">
    <citation type="journal article" date="1988" name="J. Bacteriol.">
        <title>Complete sequence and transcriptional analysis of the spo0F region of the Bacillus subtilis chromosome.</title>
        <authorList>
            <person name="Trach K."/>
            <person name="Chapman J.W."/>
            <person name="Piggot P.J."/>
            <person name="Lecoq D."/>
            <person name="Hoch J.A."/>
        </authorList>
    </citation>
    <scope>NUCLEOTIDE SEQUENCE [GENOMIC DNA]</scope>
    <source>
        <strain>168 / JH642</strain>
    </source>
</reference>
<reference key="2">
    <citation type="journal article" date="1997" name="Microbiology">
        <title>The Bacillus subtilis genome from gerBC (311 degrees) to licR (334 degrees).</title>
        <authorList>
            <person name="Presecan E."/>
            <person name="Moszer I."/>
            <person name="Boursier L."/>
            <person name="Cruz Ramos H."/>
            <person name="De La Fuente V."/>
            <person name="Hullo M.-F."/>
            <person name="Lelong C."/>
            <person name="Schleich S."/>
            <person name="Sekowska A."/>
            <person name="Song B.H."/>
            <person name="Villani G."/>
            <person name="Kunst F."/>
            <person name="Danchin A."/>
            <person name="Glaser P."/>
        </authorList>
    </citation>
    <scope>NUCLEOTIDE SEQUENCE [GENOMIC DNA]</scope>
    <source>
        <strain>168</strain>
    </source>
</reference>
<reference key="3">
    <citation type="journal article" date="1997" name="Nature">
        <title>The complete genome sequence of the Gram-positive bacterium Bacillus subtilis.</title>
        <authorList>
            <person name="Kunst F."/>
            <person name="Ogasawara N."/>
            <person name="Moszer I."/>
            <person name="Albertini A.M."/>
            <person name="Alloni G."/>
            <person name="Azevedo V."/>
            <person name="Bertero M.G."/>
            <person name="Bessieres P."/>
            <person name="Bolotin A."/>
            <person name="Borchert S."/>
            <person name="Borriss R."/>
            <person name="Boursier L."/>
            <person name="Brans A."/>
            <person name="Braun M."/>
            <person name="Brignell S.C."/>
            <person name="Bron S."/>
            <person name="Brouillet S."/>
            <person name="Bruschi C.V."/>
            <person name="Caldwell B."/>
            <person name="Capuano V."/>
            <person name="Carter N.M."/>
            <person name="Choi S.-K."/>
            <person name="Codani J.-J."/>
            <person name="Connerton I.F."/>
            <person name="Cummings N.J."/>
            <person name="Daniel R.A."/>
            <person name="Denizot F."/>
            <person name="Devine K.M."/>
            <person name="Duesterhoeft A."/>
            <person name="Ehrlich S.D."/>
            <person name="Emmerson P.T."/>
            <person name="Entian K.-D."/>
            <person name="Errington J."/>
            <person name="Fabret C."/>
            <person name="Ferrari E."/>
            <person name="Foulger D."/>
            <person name="Fritz C."/>
            <person name="Fujita M."/>
            <person name="Fujita Y."/>
            <person name="Fuma S."/>
            <person name="Galizzi A."/>
            <person name="Galleron N."/>
            <person name="Ghim S.-Y."/>
            <person name="Glaser P."/>
            <person name="Goffeau A."/>
            <person name="Golightly E.J."/>
            <person name="Grandi G."/>
            <person name="Guiseppi G."/>
            <person name="Guy B.J."/>
            <person name="Haga K."/>
            <person name="Haiech J."/>
            <person name="Harwood C.R."/>
            <person name="Henaut A."/>
            <person name="Hilbert H."/>
            <person name="Holsappel S."/>
            <person name="Hosono S."/>
            <person name="Hullo M.-F."/>
            <person name="Itaya M."/>
            <person name="Jones L.-M."/>
            <person name="Joris B."/>
            <person name="Karamata D."/>
            <person name="Kasahara Y."/>
            <person name="Klaerr-Blanchard M."/>
            <person name="Klein C."/>
            <person name="Kobayashi Y."/>
            <person name="Koetter P."/>
            <person name="Koningstein G."/>
            <person name="Krogh S."/>
            <person name="Kumano M."/>
            <person name="Kurita K."/>
            <person name="Lapidus A."/>
            <person name="Lardinois S."/>
            <person name="Lauber J."/>
            <person name="Lazarevic V."/>
            <person name="Lee S.-M."/>
            <person name="Levine A."/>
            <person name="Liu H."/>
            <person name="Masuda S."/>
            <person name="Mauel C."/>
            <person name="Medigue C."/>
            <person name="Medina N."/>
            <person name="Mellado R.P."/>
            <person name="Mizuno M."/>
            <person name="Moestl D."/>
            <person name="Nakai S."/>
            <person name="Noback M."/>
            <person name="Noone D."/>
            <person name="O'Reilly M."/>
            <person name="Ogawa K."/>
            <person name="Ogiwara A."/>
            <person name="Oudega B."/>
            <person name="Park S.-H."/>
            <person name="Parro V."/>
            <person name="Pohl T.M."/>
            <person name="Portetelle D."/>
            <person name="Porwollik S."/>
            <person name="Prescott A.M."/>
            <person name="Presecan E."/>
            <person name="Pujic P."/>
            <person name="Purnelle B."/>
            <person name="Rapoport G."/>
            <person name="Rey M."/>
            <person name="Reynolds S."/>
            <person name="Rieger M."/>
            <person name="Rivolta C."/>
            <person name="Rocha E."/>
            <person name="Roche B."/>
            <person name="Rose M."/>
            <person name="Sadaie Y."/>
            <person name="Sato T."/>
            <person name="Scanlan E."/>
            <person name="Schleich S."/>
            <person name="Schroeter R."/>
            <person name="Scoffone F."/>
            <person name="Sekiguchi J."/>
            <person name="Sekowska A."/>
            <person name="Seror S.J."/>
            <person name="Serror P."/>
            <person name="Shin B.-S."/>
            <person name="Soldo B."/>
            <person name="Sorokin A."/>
            <person name="Tacconi E."/>
            <person name="Takagi T."/>
            <person name="Takahashi H."/>
            <person name="Takemaru K."/>
            <person name="Takeuchi M."/>
            <person name="Tamakoshi A."/>
            <person name="Tanaka T."/>
            <person name="Terpstra P."/>
            <person name="Tognoni A."/>
            <person name="Tosato V."/>
            <person name="Uchiyama S."/>
            <person name="Vandenbol M."/>
            <person name="Vannier F."/>
            <person name="Vassarotti A."/>
            <person name="Viari A."/>
            <person name="Wambutt R."/>
            <person name="Wedler E."/>
            <person name="Wedler H."/>
            <person name="Weitzenegger T."/>
            <person name="Winters P."/>
            <person name="Wipat A."/>
            <person name="Yamamoto H."/>
            <person name="Yamane K."/>
            <person name="Yasumoto K."/>
            <person name="Yata K."/>
            <person name="Yoshida K."/>
            <person name="Yoshikawa H.-F."/>
            <person name="Zumstein E."/>
            <person name="Yoshikawa H."/>
            <person name="Danchin A."/>
        </authorList>
    </citation>
    <scope>NUCLEOTIDE SEQUENCE [LARGE SCALE GENOMIC DNA]</scope>
    <source>
        <strain>168</strain>
    </source>
</reference>
<reference key="4">
    <citation type="journal article" date="2021" name="Redox Biol.">
        <title>The Bacillus subtilis monothiol bacilliredoxin BrxC (YtxJ) and the Bdr (YpdA) disulfide reductase reduce S-bacillithiolated proteins.</title>
        <authorList>
            <person name="Gaballa A."/>
            <person name="Su T.T."/>
            <person name="Helmann J.D."/>
        </authorList>
    </citation>
    <scope>INTERACTION WITH BRXC</scope>
    <scope>IDENTIFICATION BY MASS SPECTROMETRY</scope>
    <source>
        <strain evidence="3">168 / CU1065</strain>
    </source>
</reference>
<gene>
    <name evidence="1" type="primary">pyrG</name>
    <name type="synonym">ctrA</name>
    <name type="ordered locus">BSU37150</name>
</gene>